<feature type="chain" id="PRO_0000283739" description="Histone deacetylase complex subunit SAP130-A">
    <location>
        <begin position="1"/>
        <end position="1008"/>
    </location>
</feature>
<feature type="region of interest" description="Disordered" evidence="2">
    <location>
        <begin position="1"/>
        <end position="44"/>
    </location>
</feature>
<feature type="region of interest" description="Disordered" evidence="2">
    <location>
        <begin position="113"/>
        <end position="134"/>
    </location>
</feature>
<feature type="region of interest" description="Disordered" evidence="2">
    <location>
        <begin position="415"/>
        <end position="435"/>
    </location>
</feature>
<feature type="region of interest" description="Disordered" evidence="2">
    <location>
        <begin position="617"/>
        <end position="720"/>
    </location>
</feature>
<feature type="compositionally biased region" description="Polar residues" evidence="2">
    <location>
        <begin position="1"/>
        <end position="31"/>
    </location>
</feature>
<feature type="compositionally biased region" description="Basic and acidic residues" evidence="2">
    <location>
        <begin position="35"/>
        <end position="44"/>
    </location>
</feature>
<feature type="compositionally biased region" description="Polar residues" evidence="2">
    <location>
        <begin position="618"/>
        <end position="644"/>
    </location>
</feature>
<feature type="compositionally biased region" description="Low complexity" evidence="2">
    <location>
        <begin position="678"/>
        <end position="697"/>
    </location>
</feature>
<evidence type="ECO:0000250" key="1"/>
<evidence type="ECO:0000256" key="2">
    <source>
        <dbReference type="SAM" id="MobiDB-lite"/>
    </source>
</evidence>
<evidence type="ECO:0000305" key="3"/>
<dbReference type="EMBL" id="BC077587">
    <property type="protein sequence ID" value="AAH77587.1"/>
    <property type="molecule type" value="mRNA"/>
</dbReference>
<dbReference type="RefSeq" id="NP_001086872.1">
    <property type="nucleotide sequence ID" value="NM_001093403.1"/>
</dbReference>
<dbReference type="SMR" id="Q6DDH6"/>
<dbReference type="DNASU" id="446707"/>
<dbReference type="GeneID" id="446707"/>
<dbReference type="KEGG" id="xla:446707"/>
<dbReference type="AGR" id="Xenbase:XB-GENE-6083649"/>
<dbReference type="CTD" id="446707"/>
<dbReference type="Xenbase" id="XB-GENE-6083649">
    <property type="gene designation" value="sap130.S"/>
</dbReference>
<dbReference type="OrthoDB" id="10048604at2759"/>
<dbReference type="Proteomes" id="UP000186698">
    <property type="component" value="Chromosome 5S"/>
</dbReference>
<dbReference type="Bgee" id="446707">
    <property type="expression patterns" value="Expressed in testis and 19 other cell types or tissues"/>
</dbReference>
<dbReference type="GO" id="GO:0070822">
    <property type="term" value="C:Sin3-type complex"/>
    <property type="evidence" value="ECO:0000318"/>
    <property type="project" value="GO_Central"/>
</dbReference>
<dbReference type="GO" id="GO:0000122">
    <property type="term" value="P:negative regulation of transcription by RNA polymerase II"/>
    <property type="evidence" value="ECO:0000318"/>
    <property type="project" value="GO_Central"/>
</dbReference>
<dbReference type="InterPro" id="IPR024137">
    <property type="entry name" value="His_deAcase_cplx_SAP130"/>
</dbReference>
<dbReference type="InterPro" id="IPR031963">
    <property type="entry name" value="SAP130_C"/>
</dbReference>
<dbReference type="PANTHER" id="PTHR13497">
    <property type="entry name" value="HISTONE DEACETYLASE COMPLEX SUBUNIT SAP130"/>
    <property type="match status" value="1"/>
</dbReference>
<dbReference type="PANTHER" id="PTHR13497:SF3">
    <property type="entry name" value="HISTONE DEACETYLASE COMPLEX SUBUNIT SAP130"/>
    <property type="match status" value="1"/>
</dbReference>
<dbReference type="Pfam" id="PF16014">
    <property type="entry name" value="SAP130_C"/>
    <property type="match status" value="1"/>
</dbReference>
<reference key="1">
    <citation type="submission" date="2004-07" db="EMBL/GenBank/DDBJ databases">
        <authorList>
            <consortium name="NIH - Xenopus Gene Collection (XGC) project"/>
        </authorList>
    </citation>
    <scope>NUCLEOTIDE SEQUENCE [LARGE SCALE MRNA]</scope>
    <source>
        <tissue>Oocyte</tissue>
    </source>
</reference>
<accession>Q6DDH6</accession>
<sequence>MNSQQFPRQAASMPSPQVSNSGASVGQNVQGQGDEVARDMDVQSRDLLGAGTVLPSRDDKQEPVVVRPYPQVQMFTSHHPLQPAPSLTMTAQPAHLTSAVPLSFSENILKQTSKSTMPSRPIAPAPPSAMSAVPKVSGQGTVTMESGLPQTSAIPVATISGQQGHPNSLHHIMAATNVHMSIIRSSAPGPPLHIGASHLPRGAAAAAVMSSSKVTTMLRPASAQIPSAAAAQSATQHIIHPPIQSRPPVTTTSLTPAVVATVSATRAQSPVITTTPAHAAEPVLRPTLSIQQHPPPSAISIQRSAQARDAATTRITLPTHPALGVQKPQLHAMTQKTLFGTGNPVAAATVAPILATNTLPSVTTSGSAPHTQVPTSTIVSMTMPTHSSHATAVTASNIPVAKVVPQQITHTSPRIQSDYGTERGNLIPIPGHRASPNPMTMEARSENRQPVPVQLQYFLPTYPPSAYPLAAHTYTPITSSVSTIRQYPVSAQAPNSAITAQSVASTVHLNQMQLINMDTSHARHIQGIQPAPVSAQGIQQSPFSAQGIQATPISTQGIQPTQMNTQAIHPATSITNQGVQTSSVSSQQASSEPKASVVLAEGATIVANPINGAFNATPGGTTVMQSHSQSPGIGSSPAQGSSPRPSILRKKPATDGTKPKADLHAAVAPGVTGDPGIADQPSAAASLPSSHHPAAAVPSPPSQPASGSMPSSIHITPATIPALSAPPPLLSNAPSGAVMPEAKVKEEAEPMDISRPVSVPLLPPNSISSPLTVLANNISIPVGELLPGASPRKKPRKQQHVISTEEGDMMETNSTDEERCHAVKPLTSRPEKRKSPPKEYIDEEGVRYVPVRPRPPITLLRHYRNPWKAAYHHFQRYSDVRVKEEKKLTLQEVANQKGITCRVQGWKTHLCAAQLLQLIKLEQDVFERLTVLQEGLVPKKKTATDDDLHRINELIQGNMQRCKLVMDQITESRDCMLKVLDHKDRVLKLLNKSGASRRLSKVKQKDKM</sequence>
<proteinExistence type="evidence at transcript level"/>
<organism>
    <name type="scientific">Xenopus laevis</name>
    <name type="common">African clawed frog</name>
    <dbReference type="NCBI Taxonomy" id="8355"/>
    <lineage>
        <taxon>Eukaryota</taxon>
        <taxon>Metazoa</taxon>
        <taxon>Chordata</taxon>
        <taxon>Craniata</taxon>
        <taxon>Vertebrata</taxon>
        <taxon>Euteleostomi</taxon>
        <taxon>Amphibia</taxon>
        <taxon>Batrachia</taxon>
        <taxon>Anura</taxon>
        <taxon>Pipoidea</taxon>
        <taxon>Pipidae</taxon>
        <taxon>Xenopodinae</taxon>
        <taxon>Xenopus</taxon>
        <taxon>Xenopus</taxon>
    </lineage>
</organism>
<gene>
    <name type="primary">sap130-a</name>
</gene>
<comment type="function">
    <text evidence="1">Acts as a transcriptional repressor.</text>
</comment>
<comment type="subcellular location">
    <subcellularLocation>
        <location evidence="1">Nucleus</location>
    </subcellularLocation>
</comment>
<comment type="similarity">
    <text evidence="3">Belongs to the SAP130 family.</text>
</comment>
<protein>
    <recommendedName>
        <fullName>Histone deacetylase complex subunit SAP130-A</fullName>
    </recommendedName>
    <alternativeName>
        <fullName>130 kDa Sin3-associated polypeptide A</fullName>
    </alternativeName>
    <alternativeName>
        <fullName>Sin3-associated polypeptide p130 A</fullName>
    </alternativeName>
</protein>
<keyword id="KW-0539">Nucleus</keyword>
<keyword id="KW-1185">Reference proteome</keyword>
<keyword id="KW-0678">Repressor</keyword>
<keyword id="KW-0804">Transcription</keyword>
<keyword id="KW-0805">Transcription regulation</keyword>
<name>SP13A_XENLA</name>